<feature type="chain" id="PRO_0000064102" description="Amine oxidase [copper-containing] 3">
    <location>
        <begin position="1"/>
        <end position="763"/>
    </location>
</feature>
<feature type="topological domain" description="Cytoplasmic" evidence="21">
    <location>
        <begin position="1"/>
        <end position="5"/>
    </location>
</feature>
<feature type="transmembrane region" description="Helical; Signal-anchor for type II membrane protein" evidence="2">
    <location>
        <begin position="6"/>
        <end position="26"/>
    </location>
</feature>
<feature type="topological domain" description="Extracellular" evidence="21">
    <location>
        <begin position="27"/>
        <end position="763"/>
    </location>
</feature>
<feature type="active site" description="Proton acceptor" evidence="1">
    <location>
        <position position="386"/>
    </location>
</feature>
<feature type="active site" description="Schiff-base intermediate with substrate; via topaquinone" evidence="3 23 24">
    <location>
        <position position="471"/>
    </location>
</feature>
<feature type="binding site" evidence="3 10 23 24 25 26 27">
    <location>
        <position position="520"/>
    </location>
    <ligand>
        <name>Cu(2+)</name>
        <dbReference type="ChEBI" id="CHEBI:29036"/>
    </ligand>
</feature>
<feature type="binding site" evidence="3 10 23 24 25 26 27">
    <location>
        <position position="522"/>
    </location>
    <ligand>
        <name>Cu(2+)</name>
        <dbReference type="ChEBI" id="CHEBI:29036"/>
    </ligand>
</feature>
<feature type="binding site" evidence="3 10 23 24 25 26 27">
    <location>
        <position position="529"/>
    </location>
    <ligand>
        <name>Ca(2+)</name>
        <dbReference type="ChEBI" id="CHEBI:29108"/>
        <label>1</label>
    </ligand>
</feature>
<feature type="binding site" evidence="3 10 23 24 25 26 27">
    <location>
        <position position="530"/>
    </location>
    <ligand>
        <name>Ca(2+)</name>
        <dbReference type="ChEBI" id="CHEBI:29108"/>
        <label>1</label>
    </ligand>
</feature>
<feature type="binding site" evidence="3 10 23 24 25 26 27">
    <location>
        <position position="531"/>
    </location>
    <ligand>
        <name>Ca(2+)</name>
        <dbReference type="ChEBI" id="CHEBI:29108"/>
        <label>1</label>
    </ligand>
</feature>
<feature type="binding site" evidence="3 10 23 24 25 26 27">
    <location>
        <position position="572"/>
    </location>
    <ligand>
        <name>Ca(2+)</name>
        <dbReference type="ChEBI" id="CHEBI:29108"/>
        <label>2</label>
    </ligand>
</feature>
<feature type="binding site" evidence="3 10 23 24 25 26 27">
    <location>
        <position position="641"/>
    </location>
    <ligand>
        <name>Ca(2+)</name>
        <dbReference type="ChEBI" id="CHEBI:29108"/>
        <label>2</label>
    </ligand>
</feature>
<feature type="binding site" evidence="3 10 23 24 25 26 27">
    <location>
        <position position="663"/>
    </location>
    <ligand>
        <name>Ca(2+)</name>
        <dbReference type="ChEBI" id="CHEBI:29108"/>
        <label>2</label>
    </ligand>
</feature>
<feature type="binding site" evidence="3 10 23 24 25 26 27">
    <location>
        <position position="665"/>
    </location>
    <ligand>
        <name>Ca(2+)</name>
        <dbReference type="ChEBI" id="CHEBI:29108"/>
        <label>2</label>
    </ligand>
</feature>
<feature type="binding site" evidence="3 10 23 24 25 26 27">
    <location>
        <position position="667"/>
    </location>
    <ligand>
        <name>Ca(2+)</name>
        <dbReference type="ChEBI" id="CHEBI:29108"/>
        <label>2</label>
    </ligand>
</feature>
<feature type="binding site" evidence="3 10 23 24 25 26 27">
    <location>
        <position position="673"/>
    </location>
    <ligand>
        <name>Ca(2+)</name>
        <dbReference type="ChEBI" id="CHEBI:29108"/>
        <label>1</label>
    </ligand>
</feature>
<feature type="binding site" evidence="3 10 23 24 25 26 27">
    <location>
        <position position="674"/>
    </location>
    <ligand>
        <name>Ca(2+)</name>
        <dbReference type="ChEBI" id="CHEBI:29108"/>
        <label>1</label>
    </ligand>
</feature>
<feature type="binding site" evidence="3 10 23 24 25 26 27">
    <location>
        <position position="684"/>
    </location>
    <ligand>
        <name>Cu(2+)</name>
        <dbReference type="ChEBI" id="CHEBI:29036"/>
    </ligand>
</feature>
<feature type="modified residue" description="2',4',5'-topaquinone" evidence="3 23">
    <location>
        <position position="471"/>
    </location>
</feature>
<feature type="glycosylation site" description="O-linked (GalNAc...) serine" evidence="19">
    <location>
        <position position="43"/>
    </location>
</feature>
<feature type="glycosylation site" description="N-linked (GlcNAc...) asparagine" evidence="3 7 23 24">
    <location>
        <position position="137"/>
    </location>
</feature>
<feature type="glycosylation site" description="O-linked (GalNAc...) threonine" evidence="19">
    <location>
        <position position="212"/>
    </location>
</feature>
<feature type="glycosylation site" description="N-linked (GlcNAc...) asparagine" evidence="3 10 23 24 26 27">
    <location>
        <position position="232"/>
    </location>
</feature>
<feature type="glycosylation site" description="N-linked (GlcNAc...) asparagine" evidence="3 7 10 27">
    <location>
        <position position="294"/>
    </location>
</feature>
<feature type="glycosylation site" description="N-linked (GlcNAc...) (complex) asparagine" evidence="3 4 6 7 10 25 26 27">
    <location>
        <position position="592"/>
    </location>
</feature>
<feature type="glycosylation site" description="N-linked (GlcNAc...) asparagine" evidence="3 4 7 10 25 26">
    <location>
        <position position="618"/>
    </location>
</feature>
<feature type="glycosylation site" description="N-linked (GlcNAc...) asparagine" evidence="3 4 7 10 25 26 27">
    <location>
        <position position="666"/>
    </location>
</feature>
<feature type="glycosylation site" description="O-linked (GlcNAc) threonine" evidence="19">
    <location>
        <position position="679"/>
    </location>
</feature>
<feature type="disulfide bond" evidence="3 10 23 24 25 26 27">
    <location>
        <begin position="198"/>
        <end position="199"/>
    </location>
</feature>
<feature type="disulfide bond" evidence="3 10 23 24 25 26 27">
    <location>
        <begin position="404"/>
        <end position="430"/>
    </location>
</feature>
<feature type="disulfide bond" evidence="3 10 23 24 25 26 27">
    <location>
        <begin position="734"/>
        <end position="741"/>
    </location>
</feature>
<feature type="disulfide bond" description="Interchain" evidence="3 10 23 24 25 26 27">
    <location>
        <position position="748"/>
    </location>
</feature>
<feature type="splice variant" id="VSP_055201" description="In isoform 3." evidence="14">
    <location>
        <begin position="1"/>
        <end position="543"/>
    </location>
</feature>
<feature type="splice variant" id="VSP_053751" description="In isoform 2." evidence="16">
    <original>YQLAV</original>
    <variation>IWWPG</variation>
    <location>
        <begin position="630"/>
        <end position="634"/>
    </location>
</feature>
<feature type="splice variant" id="VSP_053752" description="In isoform 2." evidence="16">
    <location>
        <begin position="635"/>
        <end position="763"/>
    </location>
</feature>
<feature type="sequence variant" id="VAR_025035" description="In dbSNP:rs33954211." evidence="13">
    <original>T</original>
    <variation>R</variation>
    <location>
        <position position="5"/>
    </location>
</feature>
<feature type="sequence variant" id="VAR_052603" description="In dbSNP:rs402680.">
    <original>R</original>
    <variation>Q</variation>
    <location>
        <position position="78"/>
    </location>
</feature>
<feature type="sequence variant" id="VAR_025027" description="In dbSNP:rs2228470." evidence="13">
    <original>H</original>
    <variation>Y</variation>
    <location>
        <position position="167"/>
    </location>
</feature>
<feature type="sequence variant" id="VAR_052604" description="In dbSNP:rs408038.">
    <original>V</original>
    <variation>M</variation>
    <location>
        <position position="171"/>
    </location>
</feature>
<feature type="sequence variant" id="VAR_052605" description="In dbSNP:rs630079.">
    <original>H</original>
    <variation>R</variation>
    <location>
        <position position="203"/>
    </location>
</feature>
<feature type="sequence variant" id="VAR_012064" description="In dbSNP:rs438287.">
    <original>Y</original>
    <variation>H</variation>
    <location>
        <position position="317"/>
    </location>
</feature>
<feature type="sequence variant" id="VAR_024343" description="In dbSNP:rs2229595.">
    <original>R</original>
    <variation>Q</variation>
    <location>
        <position position="329"/>
    </location>
</feature>
<feature type="sequence variant" id="VAR_025028" description="In dbSNP:rs35097308." evidence="13">
    <original>I</original>
    <variation>T</variation>
    <location>
        <position position="371"/>
    </location>
</feature>
<feature type="sequence variant" id="VAR_025029" description="In dbSNP:rs35643019." evidence="13">
    <original>A</original>
    <variation>S</variation>
    <location>
        <position position="408"/>
    </location>
</feature>
<feature type="sequence variant" id="VAR_025030" description="In dbSNP:rs33986943." evidence="13">
    <original>R</original>
    <variation>H</variation>
    <location>
        <position position="426"/>
    </location>
</feature>
<feature type="sequence variant" id="VAR_025031" description="In dbSNP:rs2229596." evidence="13">
    <original>R</original>
    <variation>W</variation>
    <location>
        <position position="441"/>
    </location>
</feature>
<feature type="sequence variant" id="VAR_025032" description="In dbSNP:rs34987927." evidence="13">
    <original>A</original>
    <variation>T</variation>
    <location>
        <position position="582"/>
    </location>
</feature>
<feature type="sequence variant" id="VAR_025033" description="In dbSNP:rs477207." evidence="13">
    <original>G</original>
    <variation>S</variation>
    <location>
        <position position="700"/>
    </location>
</feature>
<feature type="sequence variant" id="VAR_025034" description="In dbSNP:rs34012919." evidence="13">
    <original>A</original>
    <variation>V</variation>
    <location>
        <position position="749"/>
    </location>
</feature>
<feature type="mutagenesis site" description="Increased activity towards 2-phenylethylamine, and decreased activity towards methylamine and benzylamine; when associated with N-394 and G-469." evidence="8">
    <original>M</original>
    <variation>V</variation>
    <location>
        <position position="211"/>
    </location>
</feature>
<feature type="mutagenesis site" description="Increased activity towards 2-phenylethylamine, and decreased activity towards methylamine and benzylamine; when associated with V-211 and G-469." evidence="8">
    <original>Y</original>
    <variation>N</variation>
    <location>
        <position position="394"/>
    </location>
</feature>
<feature type="mutagenesis site" description="Increased activity towards 2-phenylethylamine, and decreased activity towards methylamine and benzylamine; when associated with V-211 and N-394." evidence="8">
    <original>L</original>
    <variation>G</variation>
    <location>
        <position position="469"/>
    </location>
</feature>
<feature type="helix" evidence="29">
    <location>
        <begin position="65"/>
        <end position="78"/>
    </location>
</feature>
<feature type="strand" evidence="32">
    <location>
        <begin position="83"/>
        <end position="85"/>
    </location>
</feature>
<feature type="helix" evidence="29">
    <location>
        <begin position="86"/>
        <end position="88"/>
    </location>
</feature>
<feature type="strand" evidence="29">
    <location>
        <begin position="93"/>
        <end position="102"/>
    </location>
</feature>
<feature type="helix" evidence="29">
    <location>
        <begin position="106"/>
        <end position="115"/>
    </location>
</feature>
<feature type="strand" evidence="29">
    <location>
        <begin position="123"/>
        <end position="130"/>
    </location>
</feature>
<feature type="strand" evidence="29">
    <location>
        <begin position="132"/>
        <end position="135"/>
    </location>
</feature>
<feature type="strand" evidence="29">
    <location>
        <begin position="137"/>
        <end position="144"/>
    </location>
</feature>
<feature type="strand" evidence="29">
    <location>
        <begin position="146"/>
        <end position="148"/>
    </location>
</feature>
<feature type="strand" evidence="29">
    <location>
        <begin position="151"/>
        <end position="154"/>
    </location>
</feature>
<feature type="helix" evidence="29">
    <location>
        <begin position="156"/>
        <end position="160"/>
    </location>
</feature>
<feature type="helix" evidence="29">
    <location>
        <begin position="166"/>
        <end position="168"/>
    </location>
</feature>
<feature type="helix" evidence="29">
    <location>
        <begin position="173"/>
        <end position="185"/>
    </location>
</feature>
<feature type="helix" evidence="29">
    <location>
        <begin position="188"/>
        <end position="191"/>
    </location>
</feature>
<feature type="helix" evidence="29">
    <location>
        <begin position="192"/>
        <end position="199"/>
    </location>
</feature>
<feature type="turn" evidence="30">
    <location>
        <begin position="203"/>
        <end position="206"/>
    </location>
</feature>
<feature type="strand" evidence="29">
    <location>
        <begin position="208"/>
        <end position="211"/>
    </location>
</feature>
<feature type="strand" evidence="29">
    <location>
        <begin position="217"/>
        <end position="219"/>
    </location>
</feature>
<feature type="strand" evidence="29">
    <location>
        <begin position="224"/>
        <end position="231"/>
    </location>
</feature>
<feature type="strand" evidence="29">
    <location>
        <begin position="234"/>
        <end position="236"/>
    </location>
</feature>
<feature type="helix" evidence="29">
    <location>
        <begin position="238"/>
        <end position="240"/>
    </location>
</feature>
<feature type="strand" evidence="29">
    <location>
        <begin position="242"/>
        <end position="250"/>
    </location>
</feature>
<feature type="strand" evidence="29">
    <location>
        <begin position="253"/>
        <end position="255"/>
    </location>
</feature>
<feature type="helix" evidence="29">
    <location>
        <begin position="256"/>
        <end position="258"/>
    </location>
</feature>
<feature type="strand" evidence="29">
    <location>
        <begin position="260"/>
        <end position="266"/>
    </location>
</feature>
<feature type="strand" evidence="29">
    <location>
        <begin position="269"/>
        <end position="272"/>
    </location>
</feature>
<feature type="helix" evidence="29">
    <location>
        <begin position="274"/>
        <end position="282"/>
    </location>
</feature>
<feature type="turn" evidence="33">
    <location>
        <begin position="283"/>
        <end position="285"/>
    </location>
</feature>
<feature type="turn" evidence="29">
    <location>
        <begin position="298"/>
        <end position="300"/>
    </location>
</feature>
<feature type="strand" evidence="29">
    <location>
        <begin position="314"/>
        <end position="316"/>
    </location>
</feature>
<feature type="strand" evidence="33">
    <location>
        <begin position="318"/>
        <end position="320"/>
    </location>
</feature>
<feature type="strand" evidence="29">
    <location>
        <begin position="322"/>
        <end position="326"/>
    </location>
</feature>
<feature type="strand" evidence="29">
    <location>
        <begin position="329"/>
        <end position="342"/>
    </location>
</feature>
<feature type="turn" evidence="29">
    <location>
        <begin position="343"/>
        <end position="345"/>
    </location>
</feature>
<feature type="strand" evidence="29">
    <location>
        <begin position="346"/>
        <end position="354"/>
    </location>
</feature>
<feature type="strand" evidence="29">
    <location>
        <begin position="357"/>
        <end position="372"/>
    </location>
</feature>
<feature type="helix" evidence="29">
    <location>
        <begin position="377"/>
        <end position="380"/>
    </location>
</feature>
<feature type="strand" evidence="29">
    <location>
        <begin position="383"/>
        <end position="385"/>
    </location>
</feature>
<feature type="helix" evidence="29">
    <location>
        <begin position="386"/>
        <end position="388"/>
    </location>
</feature>
<feature type="turn" evidence="29">
    <location>
        <begin position="391"/>
        <end position="394"/>
    </location>
</feature>
<feature type="turn" evidence="29">
    <location>
        <begin position="400"/>
        <end position="402"/>
    </location>
</feature>
<feature type="strand" evidence="29">
    <location>
        <begin position="408"/>
        <end position="421"/>
    </location>
</feature>
<feature type="strand" evidence="29">
    <location>
        <begin position="423"/>
        <end position="445"/>
    </location>
</feature>
<feature type="strand" evidence="29">
    <location>
        <begin position="447"/>
        <end position="449"/>
    </location>
</feature>
<feature type="strand" evidence="29">
    <location>
        <begin position="451"/>
        <end position="468"/>
    </location>
</feature>
<feature type="strand" evidence="29">
    <location>
        <begin position="471"/>
        <end position="479"/>
    </location>
</feature>
<feature type="turn" evidence="34">
    <location>
        <begin position="481"/>
        <end position="483"/>
    </location>
</feature>
<feature type="strand" evidence="29">
    <location>
        <begin position="485"/>
        <end position="493"/>
    </location>
</feature>
<feature type="strand" evidence="29">
    <location>
        <begin position="497"/>
        <end position="499"/>
    </location>
</feature>
<feature type="strand" evidence="29">
    <location>
        <begin position="506"/>
        <end position="512"/>
    </location>
</feature>
<feature type="strand" evidence="29">
    <location>
        <begin position="515"/>
        <end position="518"/>
    </location>
</feature>
<feature type="strand" evidence="29">
    <location>
        <begin position="520"/>
        <end position="530"/>
    </location>
</feature>
<feature type="strand" evidence="29">
    <location>
        <begin position="534"/>
        <end position="551"/>
    </location>
</feature>
<feature type="strand" evidence="29">
    <location>
        <begin position="554"/>
        <end position="569"/>
    </location>
</feature>
<feature type="helix" evidence="29">
    <location>
        <begin position="572"/>
        <end position="575"/>
    </location>
</feature>
<feature type="strand" evidence="33">
    <location>
        <begin position="577"/>
        <end position="581"/>
    </location>
</feature>
<feature type="strand" evidence="29">
    <location>
        <begin position="585"/>
        <end position="594"/>
    </location>
</feature>
<feature type="strand" evidence="29">
    <location>
        <begin position="600"/>
        <end position="608"/>
    </location>
</feature>
<feature type="strand" evidence="30">
    <location>
        <begin position="617"/>
        <end position="619"/>
    </location>
</feature>
<feature type="helix" evidence="29">
    <location>
        <begin position="622"/>
        <end position="629"/>
    </location>
</feature>
<feature type="strand" evidence="29">
    <location>
        <begin position="630"/>
        <end position="636"/>
    </location>
</feature>
<feature type="turn" evidence="31">
    <location>
        <begin position="647"/>
        <end position="651"/>
    </location>
</feature>
<feature type="strand" evidence="28">
    <location>
        <begin position="653"/>
        <end position="655"/>
    </location>
</feature>
<feature type="helix" evidence="29">
    <location>
        <begin position="660"/>
        <end position="663"/>
    </location>
</feature>
<feature type="strand" evidence="29">
    <location>
        <begin position="670"/>
        <end position="684"/>
    </location>
</feature>
<feature type="helix" evidence="29">
    <location>
        <begin position="688"/>
        <end position="690"/>
    </location>
</feature>
<feature type="strand" evidence="29">
    <location>
        <begin position="700"/>
        <end position="713"/>
    </location>
</feature>
<feature type="helix" evidence="29">
    <location>
        <begin position="715"/>
        <end position="718"/>
    </location>
</feature>
<feature type="strand" evidence="29">
    <location>
        <begin position="723"/>
        <end position="729"/>
    </location>
</feature>
<feature type="turn" evidence="29">
    <location>
        <begin position="734"/>
        <end position="736"/>
    </location>
</feature>
<feature type="helix" evidence="31">
    <location>
        <begin position="738"/>
        <end position="741"/>
    </location>
</feature>
<feature type="helix" evidence="29">
    <location>
        <begin position="742"/>
        <end position="745"/>
    </location>
</feature>
<name>AOC3_HUMAN</name>
<proteinExistence type="evidence at protein level"/>
<sequence length="763" mass="84622">MNQKTILVLLILAVITIFALVCVLLVGRGGDGGEPSQLPHCPSVSPSAQPWTHPGQSQLFADLSREELTAVMRFLTQRLGPGLVDAAQARPSDNCVFSVELQLPPKAAALAHLDRGSPPPAREALAIVFFGRQPQPNVSELVVGPLPHPSYMRDVTVERHGGPLPYHRRPVLFQEYLDIDQMIFNRELPQASGLLHHCCFYKHRGRNLVTMTTAPRGLQSGDRATWFGLYYNISGAGFFLHHVGLELLVNHKALDPARWTIQKVFYQGRYYDSLAQLEAQFEAGLVNVVLIPDNGTGGSWSLKSPVPPGPAPPLQFYPQGPRFSVQGSRVASSLWTFSFGLGAFSGPRIFDVRFQGERLVYEISLQEALAIYGGNSPAAMTTRYVDGGFGMGKYTTPLTRGVDCPYLATYVDWHFLLESQAPKTIRDAFCVFEQNQGLPLRRHHSDLYSHYFGGLAETVLVVRSMSTLLNYDYVWDTVFHPSGAIEIRFYATGYISSAFLFGATGKYGNQVSEHTLGTVHTHSAHFKVDLDVAGLENWVWAEDMVFVPMAVPWSPEHQLQRLQVTRKLLEMEEQAAFLVGSATPRYLYLASNHSNKWGHPRGYRIQMLSFAGEPLPQNSSMARGFSWERYQLAVTQRKEEEPSSSSVFNQNDPWAPTVDFSDFINNETIAGKDLVAWVTAGFLHIPHAEDIPNTVTVGNGVGFFLRPYNFFDEDPSFYSADSIYFRGDQDAGACEVNPLACLPQAAACAPDLPAFSHGGFSHN</sequence>
<reference key="1">
    <citation type="journal article" date="1996" name="Gene">
        <title>Cloning and sequencing of a copper-containing, topaquinone-containing monoamine oxidase from human placenta.</title>
        <authorList>
            <person name="Zhang X."/>
            <person name="McIntire W.S."/>
        </authorList>
    </citation>
    <scope>NUCLEOTIDE SEQUENCE [MRNA] (ISOFORM 1)</scope>
    <source>
        <tissue>Placenta</tissue>
    </source>
</reference>
<reference key="2">
    <citation type="journal article" date="1998" name="J. Exp. Med.">
        <title>Cloning of vascular adhesion protein 1 reveals a novel multifunctional adhesion molecule.</title>
        <authorList>
            <person name="Smith D.J."/>
            <person name="Salmi M."/>
            <person name="Bono P."/>
            <person name="Hellman J."/>
            <person name="Leu T."/>
            <person name="Jalkanen S."/>
        </authorList>
    </citation>
    <scope>NUCLEOTIDE SEQUENCE [MRNA] (ISOFORM 1)</scope>
    <scope>PARTIAL PROTEIN SEQUENCE</scope>
    <scope>FUNCTION</scope>
    <scope>CATALYTIC ACTIVITY</scope>
    <scope>SUBSTRATE SPECIFICITY</scope>
    <scope>SELF-ASSOCIATION</scope>
    <scope>SUBCELLULAR LOCATION</scope>
    <scope>TOPOLOGY</scope>
    <scope>TISSUE SPECIFICITY</scope>
    <source>
        <tissue>Lung</tissue>
    </source>
</reference>
<reference key="3">
    <citation type="journal article" date="2003" name="Gene">
        <title>Characterization of AOC2 gene encoding a copper-binding amine oxidase expressed specifically in retina.</title>
        <authorList>
            <person name="Zhang Q."/>
            <person name="Mashima Y."/>
            <person name="Noda S."/>
            <person name="Imamura Y."/>
            <person name="Kudoh J."/>
            <person name="Shimizu N."/>
            <person name="Nishiyama T."/>
            <person name="Umeda S."/>
            <person name="Oguchi Y."/>
            <person name="Tanaka Y."/>
            <person name="Iwata T."/>
        </authorList>
    </citation>
    <scope>NUCLEOTIDE SEQUENCE [GENOMIC DNA]</scope>
</reference>
<reference key="4">
    <citation type="journal article" date="2013" name="PLoS ONE">
        <title>Functional modulation of vascular adhesion protein-1 by a novel splice variant.</title>
        <authorList>
            <person name="Kaitaniemi S."/>
            <person name="Gron K."/>
            <person name="Elovaara H."/>
            <person name="Salmi M."/>
            <person name="Jalkanen S."/>
            <person name="Elima K."/>
        </authorList>
    </citation>
    <scope>NUCLEOTIDE SEQUENCE [MRNA] (ISOFORM 2)</scope>
    <scope>FUNCTION (ISOFORM 2)</scope>
    <scope>SUBUNIT</scope>
    <scope>ALTERNATIVE SPLICING</scope>
    <scope>TISSUE SPECIFICITY</scope>
</reference>
<reference key="5">
    <citation type="journal article" date="2004" name="Nat. Genet.">
        <title>Complete sequencing and characterization of 21,243 full-length human cDNAs.</title>
        <authorList>
            <person name="Ota T."/>
            <person name="Suzuki Y."/>
            <person name="Nishikawa T."/>
            <person name="Otsuki T."/>
            <person name="Sugiyama T."/>
            <person name="Irie R."/>
            <person name="Wakamatsu A."/>
            <person name="Hayashi K."/>
            <person name="Sato H."/>
            <person name="Nagai K."/>
            <person name="Kimura K."/>
            <person name="Makita H."/>
            <person name="Sekine M."/>
            <person name="Obayashi M."/>
            <person name="Nishi T."/>
            <person name="Shibahara T."/>
            <person name="Tanaka T."/>
            <person name="Ishii S."/>
            <person name="Yamamoto J."/>
            <person name="Saito K."/>
            <person name="Kawai Y."/>
            <person name="Isono Y."/>
            <person name="Nakamura Y."/>
            <person name="Nagahari K."/>
            <person name="Murakami K."/>
            <person name="Yasuda T."/>
            <person name="Iwayanagi T."/>
            <person name="Wagatsuma M."/>
            <person name="Shiratori A."/>
            <person name="Sudo H."/>
            <person name="Hosoiri T."/>
            <person name="Kaku Y."/>
            <person name="Kodaira H."/>
            <person name="Kondo H."/>
            <person name="Sugawara M."/>
            <person name="Takahashi M."/>
            <person name="Kanda K."/>
            <person name="Yokoi T."/>
            <person name="Furuya T."/>
            <person name="Kikkawa E."/>
            <person name="Omura Y."/>
            <person name="Abe K."/>
            <person name="Kamihara K."/>
            <person name="Katsuta N."/>
            <person name="Sato K."/>
            <person name="Tanikawa M."/>
            <person name="Yamazaki M."/>
            <person name="Ninomiya K."/>
            <person name="Ishibashi T."/>
            <person name="Yamashita H."/>
            <person name="Murakawa K."/>
            <person name="Fujimori K."/>
            <person name="Tanai H."/>
            <person name="Kimata M."/>
            <person name="Watanabe M."/>
            <person name="Hiraoka S."/>
            <person name="Chiba Y."/>
            <person name="Ishida S."/>
            <person name="Ono Y."/>
            <person name="Takiguchi S."/>
            <person name="Watanabe S."/>
            <person name="Yosida M."/>
            <person name="Hotuta T."/>
            <person name="Kusano J."/>
            <person name="Kanehori K."/>
            <person name="Takahashi-Fujii A."/>
            <person name="Hara H."/>
            <person name="Tanase T.-O."/>
            <person name="Nomura Y."/>
            <person name="Togiya S."/>
            <person name="Komai F."/>
            <person name="Hara R."/>
            <person name="Takeuchi K."/>
            <person name="Arita M."/>
            <person name="Imose N."/>
            <person name="Musashino K."/>
            <person name="Yuuki H."/>
            <person name="Oshima A."/>
            <person name="Sasaki N."/>
            <person name="Aotsuka S."/>
            <person name="Yoshikawa Y."/>
            <person name="Matsunawa H."/>
            <person name="Ichihara T."/>
            <person name="Shiohata N."/>
            <person name="Sano S."/>
            <person name="Moriya S."/>
            <person name="Momiyama H."/>
            <person name="Satoh N."/>
            <person name="Takami S."/>
            <person name="Terashima Y."/>
            <person name="Suzuki O."/>
            <person name="Nakagawa S."/>
            <person name="Senoh A."/>
            <person name="Mizoguchi H."/>
            <person name="Goto Y."/>
            <person name="Shimizu F."/>
            <person name="Wakebe H."/>
            <person name="Hishigaki H."/>
            <person name="Watanabe T."/>
            <person name="Sugiyama A."/>
            <person name="Takemoto M."/>
            <person name="Kawakami B."/>
            <person name="Yamazaki M."/>
            <person name="Watanabe K."/>
            <person name="Kumagai A."/>
            <person name="Itakura S."/>
            <person name="Fukuzumi Y."/>
            <person name="Fujimori Y."/>
            <person name="Komiyama M."/>
            <person name="Tashiro H."/>
            <person name="Tanigami A."/>
            <person name="Fujiwara T."/>
            <person name="Ono T."/>
            <person name="Yamada K."/>
            <person name="Fujii Y."/>
            <person name="Ozaki K."/>
            <person name="Hirao M."/>
            <person name="Ohmori Y."/>
            <person name="Kawabata A."/>
            <person name="Hikiji T."/>
            <person name="Kobatake N."/>
            <person name="Inagaki H."/>
            <person name="Ikema Y."/>
            <person name="Okamoto S."/>
            <person name="Okitani R."/>
            <person name="Kawakami T."/>
            <person name="Noguchi S."/>
            <person name="Itoh T."/>
            <person name="Shigeta K."/>
            <person name="Senba T."/>
            <person name="Matsumura K."/>
            <person name="Nakajima Y."/>
            <person name="Mizuno T."/>
            <person name="Morinaga M."/>
            <person name="Sasaki M."/>
            <person name="Togashi T."/>
            <person name="Oyama M."/>
            <person name="Hata H."/>
            <person name="Watanabe M."/>
            <person name="Komatsu T."/>
            <person name="Mizushima-Sugano J."/>
            <person name="Satoh T."/>
            <person name="Shirai Y."/>
            <person name="Takahashi Y."/>
            <person name="Nakagawa K."/>
            <person name="Okumura K."/>
            <person name="Nagase T."/>
            <person name="Nomura N."/>
            <person name="Kikuchi H."/>
            <person name="Masuho Y."/>
            <person name="Yamashita R."/>
            <person name="Nakai K."/>
            <person name="Yada T."/>
            <person name="Nakamura Y."/>
            <person name="Ohara O."/>
            <person name="Isogai T."/>
            <person name="Sugano S."/>
        </authorList>
    </citation>
    <scope>NUCLEOTIDE SEQUENCE [LARGE SCALE MRNA] (ISOFORMS 1 AND 3)</scope>
    <source>
        <tissue>Placenta</tissue>
    </source>
</reference>
<reference key="6">
    <citation type="submission" date="2005-07" db="EMBL/GenBank/DDBJ databases">
        <authorList>
            <consortium name="NIEHS SNPs program"/>
        </authorList>
    </citation>
    <scope>NUCLEOTIDE SEQUENCE [GENOMIC DNA]</scope>
    <scope>VARIANTS ARG-5; TYR-167; THR-371; SER-408; HIS-426; TRP-441; THR-582; SER-700 AND VAL-749</scope>
</reference>
<reference key="7">
    <citation type="journal article" date="2006" name="Nature">
        <title>DNA sequence of human chromosome 17 and analysis of rearrangement in the human lineage.</title>
        <authorList>
            <person name="Zody M.C."/>
            <person name="Garber M."/>
            <person name="Adams D.J."/>
            <person name="Sharpe T."/>
            <person name="Harrow J."/>
            <person name="Lupski J.R."/>
            <person name="Nicholson C."/>
            <person name="Searle S.M."/>
            <person name="Wilming L."/>
            <person name="Young S.K."/>
            <person name="Abouelleil A."/>
            <person name="Allen N.R."/>
            <person name="Bi W."/>
            <person name="Bloom T."/>
            <person name="Borowsky M.L."/>
            <person name="Bugalter B.E."/>
            <person name="Butler J."/>
            <person name="Chang J.L."/>
            <person name="Chen C.-K."/>
            <person name="Cook A."/>
            <person name="Corum B."/>
            <person name="Cuomo C.A."/>
            <person name="de Jong P.J."/>
            <person name="DeCaprio D."/>
            <person name="Dewar K."/>
            <person name="FitzGerald M."/>
            <person name="Gilbert J."/>
            <person name="Gibson R."/>
            <person name="Gnerre S."/>
            <person name="Goldstein S."/>
            <person name="Grafham D.V."/>
            <person name="Grocock R."/>
            <person name="Hafez N."/>
            <person name="Hagopian D.S."/>
            <person name="Hart E."/>
            <person name="Norman C.H."/>
            <person name="Humphray S."/>
            <person name="Jaffe D.B."/>
            <person name="Jones M."/>
            <person name="Kamal M."/>
            <person name="Khodiyar V.K."/>
            <person name="LaButti K."/>
            <person name="Laird G."/>
            <person name="Lehoczky J."/>
            <person name="Liu X."/>
            <person name="Lokyitsang T."/>
            <person name="Loveland J."/>
            <person name="Lui A."/>
            <person name="Macdonald P."/>
            <person name="Major J.E."/>
            <person name="Matthews L."/>
            <person name="Mauceli E."/>
            <person name="McCarroll S.A."/>
            <person name="Mihalev A.H."/>
            <person name="Mudge J."/>
            <person name="Nguyen C."/>
            <person name="Nicol R."/>
            <person name="O'Leary S.B."/>
            <person name="Osoegawa K."/>
            <person name="Schwartz D.C."/>
            <person name="Shaw-Smith C."/>
            <person name="Stankiewicz P."/>
            <person name="Steward C."/>
            <person name="Swarbreck D."/>
            <person name="Venkataraman V."/>
            <person name="Whittaker C.A."/>
            <person name="Yang X."/>
            <person name="Zimmer A.R."/>
            <person name="Bradley A."/>
            <person name="Hubbard T."/>
            <person name="Birren B.W."/>
            <person name="Rogers J."/>
            <person name="Lander E.S."/>
            <person name="Nusbaum C."/>
        </authorList>
    </citation>
    <scope>NUCLEOTIDE SEQUENCE [LARGE SCALE GENOMIC DNA]</scope>
</reference>
<reference key="8">
    <citation type="journal article" date="2004" name="Genome Res.">
        <title>The status, quality, and expansion of the NIH full-length cDNA project: the Mammalian Gene Collection (MGC).</title>
        <authorList>
            <consortium name="The MGC Project Team"/>
        </authorList>
    </citation>
    <scope>NUCLEOTIDE SEQUENCE [LARGE SCALE MRNA] (ISOFORM 1)</scope>
    <source>
        <tissue>PNS</tissue>
    </source>
</reference>
<reference key="9">
    <citation type="journal article" date="2004" name="Biochem. J.">
        <title>Vectorial proteomics reveal targeting, phosphorylation and specific fragmentation of polymerase I and transcript release factor (PTRF) at the surface of caveolae in human adipocytes.</title>
        <authorList>
            <person name="Aboulaich N."/>
            <person name="Vainonen J.P."/>
            <person name="Stralfors P."/>
            <person name="Vener A.V."/>
        </authorList>
    </citation>
    <scope>PROTEIN SEQUENCE OF 79-90 AND 123-132</scope>
    <source>
        <tissue>Adipocyte</tissue>
    </source>
</reference>
<reference key="10">
    <citation type="journal article" date="1997" name="J. Exp. Med.">
        <title>Vascular adhesion protein 1 (VAP-1) mediates lymphocyte subtype-specific, selectin-independent recognition of vascular endothelium in human lymph nodes.</title>
        <authorList>
            <person name="Salmi M."/>
            <person name="Tohka S."/>
            <person name="Berg E.L."/>
            <person name="Butcher E.C."/>
            <person name="Jalkanen S."/>
        </authorList>
    </citation>
    <scope>IDENTIFICATION</scope>
    <scope>FUNCTION</scope>
</reference>
<reference key="11">
    <citation type="journal article" date="2005" name="J. Proteome Res.">
        <title>Human plasma N-glycoproteome analysis by immunoaffinity subtraction, hydrazide chemistry, and mass spectrometry.</title>
        <authorList>
            <person name="Liu T."/>
            <person name="Qian W.-J."/>
            <person name="Gritsenko M.A."/>
            <person name="Camp D.G. II"/>
            <person name="Monroe M.E."/>
            <person name="Moore R.J."/>
            <person name="Smith R.D."/>
        </authorList>
    </citation>
    <scope>GLYCOSYLATION [LARGE SCALE ANALYSIS] AT ASN-592; ASN-618 AND ASN-666</scope>
    <source>
        <tissue>Plasma</tissue>
    </source>
</reference>
<reference key="12">
    <citation type="journal article" date="2007" name="Biochimie">
        <title>Adipogenesis-related increase of semicarbazide-sensitive amine oxidase and monoamine oxidase in human adipocytes.</title>
        <authorList>
            <person name="Bour S."/>
            <person name="Daviaud D."/>
            <person name="Gres S."/>
            <person name="Lefort C."/>
            <person name="Prevot D."/>
            <person name="Zorzano A."/>
            <person name="Wabitsch M."/>
            <person name="Saulnier-Blache J.-S."/>
            <person name="Valet P."/>
            <person name="Carpene C."/>
        </authorList>
    </citation>
    <scope>FUNCTION</scope>
    <scope>TISSUE SPECIFICITY</scope>
    <scope>INDUCTION</scope>
</reference>
<reference key="13">
    <citation type="journal article" date="2009" name="Cell. Mol. Life Sci.">
        <title>The unique substrate specificity of human AOC2, a semicarbazide-sensitive amine oxidase.</title>
        <authorList>
            <person name="Kaitaniemi S."/>
            <person name="Elovaara H."/>
            <person name="Groen K."/>
            <person name="Kidron H."/>
            <person name="Liukkonen J."/>
            <person name="Salminen T."/>
            <person name="Salmi M."/>
            <person name="Jalkanen S."/>
            <person name="Elima K."/>
        </authorList>
    </citation>
    <scope>FUNCTION</scope>
    <scope>CATALYTIC ACTIVITY</scope>
    <scope>BIOPHYSICOCHEMICAL PROPERTIES</scope>
    <scope>SUBUNIT</scope>
    <scope>MUTAGENESIS OF MET-211; TYR-394 AND LEU-469</scope>
</reference>
<reference key="14">
    <citation type="journal article" date="2009" name="J. Proteome Res.">
        <title>Glycoproteomics analysis of human liver tissue by combination of multiple enzyme digestion and hydrazide chemistry.</title>
        <authorList>
            <person name="Chen R."/>
            <person name="Jiang X."/>
            <person name="Sun D."/>
            <person name="Han G."/>
            <person name="Wang F."/>
            <person name="Ye M."/>
            <person name="Wang L."/>
            <person name="Zou H."/>
        </authorList>
    </citation>
    <scope>GLYCOSYLATION [LARGE SCALE ANALYSIS] AT ASN-137; ASN-294; ASN-592; ASN-618 AND ASN-666</scope>
    <source>
        <tissue>Liver</tissue>
    </source>
</reference>
<reference key="15">
    <citation type="journal article" date="2009" name="Mol. Cell. Proteomics">
        <title>A strategy for precise and large scale identification of core fucosylated glycoproteins.</title>
        <authorList>
            <person name="Jia W."/>
            <person name="Lu Z."/>
            <person name="Fu Y."/>
            <person name="Wang H.P."/>
            <person name="Wang L.H."/>
            <person name="Chi H."/>
            <person name="Yuan Z.F."/>
            <person name="Zheng Z.B."/>
            <person name="Song L.N."/>
            <person name="Han H.H."/>
            <person name="Liang Y.M."/>
            <person name="Wang J.L."/>
            <person name="Cai Y."/>
            <person name="Zhang Y.K."/>
            <person name="Deng Y.L."/>
            <person name="Ying W.T."/>
            <person name="He S.M."/>
            <person name="Qian X.H."/>
        </authorList>
    </citation>
    <scope>GLYCOSYLATION AT ASN-592</scope>
</reference>
<reference evidence="23 24" key="16">
    <citation type="journal article" date="2005" name="Protein Sci.">
        <title>Crystal structure of the human vascular adhesion protein-1: unique structural features with functional implications.</title>
        <authorList>
            <person name="Airenne T.T."/>
            <person name="Nymalm Y."/>
            <person name="Kidron H."/>
            <person name="Smith D.J."/>
            <person name="Pihlavisto M."/>
            <person name="Salmi M."/>
            <person name="Jalkanen S."/>
            <person name="Johnson M.S."/>
            <person name="Salminen T.A."/>
        </authorList>
    </citation>
    <scope>X-RAY CRYSTALLOGRAPHY (2.90 ANGSTROMS) IN COMPLEX WITH CALCIUM; COPPER AND SUBSTRATE</scope>
    <scope>SUBUNIT</scope>
    <scope>DISULFIDE BONDS</scope>
    <scope>TOPAQUINONE AT TYR-471</scope>
    <scope>GLYCOSYLATION AT ASN-137; THR-212; ASN-232; ASN-294; ASN-592; ASN-618 AND ASN-666</scope>
</reference>
<reference evidence="25 26 27" key="17">
    <citation type="journal article" date="2013" name="J. Med. Chem.">
        <title>Novel pyridazinone inhibitors for vascular adhesion protein-1 (VAP-1): old target-new inhibition mode.</title>
        <authorList>
            <person name="Bligt-Linden E."/>
            <person name="Pihlavisto M."/>
            <person name="Szatmari I."/>
            <person name="Otwinowski Z."/>
            <person name="Smith D.J."/>
            <person name="Lazar L."/>
            <person name="Fueloep F."/>
            <person name="Salminen T.A."/>
        </authorList>
    </citation>
    <scope>X-RAY CRYSTALLOGRAPHY (2.78 ANGSTROMS) OF 27-763 IN COMPLEX WITH INHIBITORS; CA(2+) AND CU(2+)</scope>
    <scope>FUNCTION</scope>
    <scope>CATALYTIC ACTIVITY</scope>
    <scope>GLYCOSYLATION AT SER-43; ASN-137; ASN-232; ASN-294; ASN-592; ASN-618; ASN-666 AND THR-679</scope>
</reference>
<comment type="function">
    <text evidence="8 10 11 12">Catalyzes the oxidative deamination of primary amines to the corresponding aldehydes with the concomitant production of hydrogen peroxide and ammonia (PubMed:19588076, PubMed:24304424, PubMed:9653080). Has a preference for the primary monoamines methylamine and benzylamine (PubMed:19588076, PubMed:9653080). Could also act on 2-phenylethylamine but much less efficiently (PubMed:19588076). At endothelial cells surface can also function as a cell adhesion protein that participates in lymphocyte extravasation and recirculation by mediating the binding of lymphocytes to peripheral lymph node vascular endothelial cells in an L-selectin-independent fashion (PubMed:9254657, PubMed:9653080).</text>
</comment>
<comment type="function">
    <molecule>Isoform 2</molecule>
    <text evidence="9">Has no semicarbazide-sensitive amine oxidase (SSAO) activity.</text>
</comment>
<comment type="catalytic activity">
    <molecule>Isoform 1</molecule>
    <reaction evidence="8">
        <text>methylamine + O2 + H2O = formaldehyde + H2O2 + NH4(+)</text>
        <dbReference type="Rhea" id="RHEA:59420"/>
        <dbReference type="ChEBI" id="CHEBI:15377"/>
        <dbReference type="ChEBI" id="CHEBI:15379"/>
        <dbReference type="ChEBI" id="CHEBI:16240"/>
        <dbReference type="ChEBI" id="CHEBI:16842"/>
        <dbReference type="ChEBI" id="CHEBI:28938"/>
        <dbReference type="ChEBI" id="CHEBI:59338"/>
    </reaction>
    <physiologicalReaction direction="left-to-right" evidence="20">
        <dbReference type="Rhea" id="RHEA:59421"/>
    </physiologicalReaction>
</comment>
<comment type="catalytic activity">
    <molecule>Isoform 1</molecule>
    <reaction evidence="8 10 12">
        <text>benzylamine + O2 + H2O = benzaldehyde + H2O2 + NH4(+)</text>
        <dbReference type="Rhea" id="RHEA:59424"/>
        <dbReference type="ChEBI" id="CHEBI:15377"/>
        <dbReference type="ChEBI" id="CHEBI:15379"/>
        <dbReference type="ChEBI" id="CHEBI:16240"/>
        <dbReference type="ChEBI" id="CHEBI:17169"/>
        <dbReference type="ChEBI" id="CHEBI:28938"/>
        <dbReference type="ChEBI" id="CHEBI:225238"/>
    </reaction>
    <physiologicalReaction direction="left-to-right" evidence="20">
        <dbReference type="Rhea" id="RHEA:59425"/>
    </physiologicalReaction>
</comment>
<comment type="catalytic activity">
    <molecule>Isoform 1</molecule>
    <reaction evidence="8">
        <text>2-phenylethylamine + O2 + H2O = 2-phenylacetaldehyde + H2O2 + NH4(+)</text>
        <dbReference type="Rhea" id="RHEA:25265"/>
        <dbReference type="ChEBI" id="CHEBI:15377"/>
        <dbReference type="ChEBI" id="CHEBI:15379"/>
        <dbReference type="ChEBI" id="CHEBI:16240"/>
        <dbReference type="ChEBI" id="CHEBI:16424"/>
        <dbReference type="ChEBI" id="CHEBI:28938"/>
        <dbReference type="ChEBI" id="CHEBI:225237"/>
        <dbReference type="EC" id="1.4.3.21"/>
    </reaction>
    <physiologicalReaction direction="left-to-right" evidence="20">
        <dbReference type="Rhea" id="RHEA:25266"/>
    </physiologicalReaction>
</comment>
<comment type="cofactor">
    <cofactor evidence="3 10">
        <name>Cu(2+)</name>
        <dbReference type="ChEBI" id="CHEBI:29036"/>
    </cofactor>
    <text evidence="3 10">Binds 1 copper ion per subunit.</text>
</comment>
<comment type="cofactor">
    <cofactor evidence="3 10">
        <name>Ca(2+)</name>
        <dbReference type="ChEBI" id="CHEBI:29108"/>
    </cofactor>
    <text evidence="3 10">Binds 2 calcium ions per subunit.</text>
</comment>
<comment type="cofactor">
    <cofactor evidence="3 10">
        <name>L-topaquinone</name>
        <dbReference type="ChEBI" id="CHEBI:79027"/>
    </cofactor>
    <text evidence="3 10">Contains 1 topaquinone per subunit.</text>
</comment>
<comment type="biophysicochemical properties">
    <kinetics>
        <KM evidence="8">1.94 mM for 2-phenylethylamine</KM>
        <KM evidence="8">0.67 mM for methylamine</KM>
    </kinetics>
</comment>
<comment type="subunit">
    <text evidence="3 8 9">Homodimer; disulfide-linked (PubMed:16046623). Can heterodimerize with isoform 2 leading to reduced surface expression (PubMed:23349812). Probably forms heterodimers with AOC2 (PubMed:19588076).</text>
</comment>
<comment type="interaction">
    <interactant intactId="EBI-3921628">
        <id>Q16853</id>
    </interactant>
    <interactant intactId="EBI-11343438">
        <id>Q3SXY8</id>
        <label>ARL13B</label>
    </interactant>
    <organismsDiffer>false</organismsDiffer>
    <experiments>3</experiments>
</comment>
<comment type="interaction">
    <interactant intactId="EBI-3921628">
        <id>Q16853</id>
    </interactant>
    <interactant intactId="EBI-18341636">
        <id>O95484</id>
        <label>CLDN9</label>
    </interactant>
    <organismsDiffer>false</organismsDiffer>
    <experiments>3</experiments>
</comment>
<comment type="interaction">
    <interactant intactId="EBI-3921628">
        <id>Q16853</id>
    </interactant>
    <interactant intactId="EBI-18013275">
        <id>Q7Z7G2</id>
        <label>CPLX4</label>
    </interactant>
    <organismsDiffer>false</organismsDiffer>
    <experiments>3</experiments>
</comment>
<comment type="interaction">
    <interactant intactId="EBI-3921628">
        <id>Q16853</id>
    </interactant>
    <interactant intactId="EBI-6942903">
        <id>Q96BA8</id>
        <label>CREB3L1</label>
    </interactant>
    <organismsDiffer>false</organismsDiffer>
    <experiments>3</experiments>
</comment>
<comment type="interaction">
    <interactant intactId="EBI-3921628">
        <id>Q16853</id>
    </interactant>
    <interactant intactId="EBI-3917045">
        <id>Q6PI48</id>
        <label>DARS2</label>
    </interactant>
    <organismsDiffer>false</organismsDiffer>
    <experiments>3</experiments>
</comment>
<comment type="interaction">
    <interactant intactId="EBI-3921628">
        <id>Q16853</id>
    </interactant>
    <interactant intactId="EBI-12142257">
        <id>Q8TBE3</id>
        <label>FNDC9</label>
    </interactant>
    <organismsDiffer>false</organismsDiffer>
    <experiments>3</experiments>
</comment>
<comment type="interaction">
    <interactant intactId="EBI-3921628">
        <id>Q16853</id>
    </interactant>
    <interactant intactId="EBI-18053395">
        <id>Q7Z5P4</id>
        <label>HSD17B13</label>
    </interactant>
    <organismsDiffer>false</organismsDiffer>
    <experiments>3</experiments>
</comment>
<comment type="interaction">
    <interactant intactId="EBI-3921628">
        <id>Q16853</id>
    </interactant>
    <interactant intactId="EBI-466029">
        <id>P42858</id>
        <label>HTT</label>
    </interactant>
    <organismsDiffer>false</organismsDiffer>
    <experiments>3</experiments>
</comment>
<comment type="interaction">
    <interactant intactId="EBI-3921628">
        <id>Q16853</id>
    </interactant>
    <interactant intactId="EBI-347996">
        <id>O43765</id>
        <label>SGTA</label>
    </interactant>
    <organismsDiffer>false</organismsDiffer>
    <experiments>3</experiments>
</comment>
<comment type="interaction">
    <interactant intactId="EBI-3921628">
        <id>Q16853</id>
    </interactant>
    <interactant intactId="EBI-712466">
        <id>Q16623</id>
        <label>STX1A</label>
    </interactant>
    <organismsDiffer>false</organismsDiffer>
    <experiments>3</experiments>
</comment>
<comment type="subcellular location">
    <subcellularLocation>
        <location evidence="12">Cell membrane</location>
        <topology evidence="12">Single-pass type II membrane protein</topology>
    </subcellularLocation>
</comment>
<comment type="alternative products">
    <event type="alternative splicing"/>
    <isoform>
        <id>Q16853-1</id>
        <name>1</name>
        <sequence type="displayed"/>
    </isoform>
    <isoform>
        <id>Q16853-2</id>
        <name>2</name>
        <name>VAP-1Delta3</name>
        <sequence type="described" ref="VSP_053751 VSP_053752"/>
    </isoform>
    <isoform>
        <id>Q16853-3</id>
        <name>3</name>
        <sequence type="described" ref="VSP_055201"/>
    </isoform>
</comment>
<comment type="tissue specificity">
    <text evidence="5 9 12">Strongly expressed on the high endothelial venules of peripheral lymph nodes and on hepatic endothelia. Also highly expressed in appendix, lung and small intestine. Expressed also in adipose tissue, in bone marrow, colon, heart, kidney, ovary, pancreas, placenta, prostate, skeletal muscle, spleen and testis. Isoform 2 seems to be the predominant transcript in fetal kidneys, fetal cartilage and fetal tonsils. The highest relative expression of isoform 2 occurs in skeletal muscle, heart, pancreas, kidney, and lung.</text>
</comment>
<comment type="induction">
    <text evidence="5">Up-regulated during in vitro adipocyte differentiation.</text>
</comment>
<comment type="PTM">
    <text evidence="3">Topaquinone (TPQ) is generated by copper-dependent autoxidation of a specific tyrosyl residue.</text>
</comment>
<comment type="PTM">
    <text evidence="3 4 6 7">N- and O-glycosylated.</text>
</comment>
<comment type="miscellaneous">
    <text evidence="18">Dubious isoform lacking the transmembrane domain and active sites and is therefore most probably catalytically inactive.</text>
</comment>
<comment type="similarity">
    <text evidence="18">Belongs to the copper/topaquinone oxidase family.</text>
</comment>
<gene>
    <name evidence="22" type="primary">AOC3</name>
    <name type="synonym">VAP1</name>
</gene>
<organism>
    <name type="scientific">Homo sapiens</name>
    <name type="common">Human</name>
    <dbReference type="NCBI Taxonomy" id="9606"/>
    <lineage>
        <taxon>Eukaryota</taxon>
        <taxon>Metazoa</taxon>
        <taxon>Chordata</taxon>
        <taxon>Craniata</taxon>
        <taxon>Vertebrata</taxon>
        <taxon>Euteleostomi</taxon>
        <taxon>Mammalia</taxon>
        <taxon>Eutheria</taxon>
        <taxon>Euarchontoglires</taxon>
        <taxon>Primates</taxon>
        <taxon>Haplorrhini</taxon>
        <taxon>Catarrhini</taxon>
        <taxon>Hominidae</taxon>
        <taxon>Homo</taxon>
    </lineage>
</organism>
<evidence type="ECO:0000250" key="1">
    <source>
        <dbReference type="UniProtKB" id="P19801"/>
    </source>
</evidence>
<evidence type="ECO:0000255" key="2"/>
<evidence type="ECO:0000269" key="3">
    <source>
    </source>
</evidence>
<evidence type="ECO:0000269" key="4">
    <source>
    </source>
</evidence>
<evidence type="ECO:0000269" key="5">
    <source>
    </source>
</evidence>
<evidence type="ECO:0000269" key="6">
    <source>
    </source>
</evidence>
<evidence type="ECO:0000269" key="7">
    <source>
    </source>
</evidence>
<evidence type="ECO:0000269" key="8">
    <source>
    </source>
</evidence>
<evidence type="ECO:0000269" key="9">
    <source>
    </source>
</evidence>
<evidence type="ECO:0000269" key="10">
    <source>
    </source>
</evidence>
<evidence type="ECO:0000269" key="11">
    <source>
    </source>
</evidence>
<evidence type="ECO:0000269" key="12">
    <source>
    </source>
</evidence>
<evidence type="ECO:0000269" key="13">
    <source ref="6"/>
</evidence>
<evidence type="ECO:0000303" key="14">
    <source>
    </source>
</evidence>
<evidence type="ECO:0000303" key="15">
    <source>
    </source>
</evidence>
<evidence type="ECO:0000303" key="16">
    <source>
    </source>
</evidence>
<evidence type="ECO:0000303" key="17">
    <source>
    </source>
</evidence>
<evidence type="ECO:0000305" key="18"/>
<evidence type="ECO:0000305" key="19">
    <source>
    </source>
</evidence>
<evidence type="ECO:0000305" key="20">
    <source>
    </source>
</evidence>
<evidence type="ECO:0000305" key="21">
    <source>
    </source>
</evidence>
<evidence type="ECO:0000312" key="22">
    <source>
        <dbReference type="HGNC" id="HGNC:550"/>
    </source>
</evidence>
<evidence type="ECO:0007744" key="23">
    <source>
        <dbReference type="PDB" id="1PU4"/>
    </source>
</evidence>
<evidence type="ECO:0007744" key="24">
    <source>
        <dbReference type="PDB" id="1US1"/>
    </source>
</evidence>
<evidence type="ECO:0007744" key="25">
    <source>
        <dbReference type="PDB" id="4BTW"/>
    </source>
</evidence>
<evidence type="ECO:0007744" key="26">
    <source>
        <dbReference type="PDB" id="4BTX"/>
    </source>
</evidence>
<evidence type="ECO:0007744" key="27">
    <source>
        <dbReference type="PDB" id="4BTY"/>
    </source>
</evidence>
<evidence type="ECO:0007829" key="28">
    <source>
        <dbReference type="PDB" id="1US1"/>
    </source>
</evidence>
<evidence type="ECO:0007829" key="29">
    <source>
        <dbReference type="PDB" id="2C10"/>
    </source>
</evidence>
<evidence type="ECO:0007829" key="30">
    <source>
        <dbReference type="PDB" id="2C11"/>
    </source>
</evidence>
<evidence type="ECO:0007829" key="31">
    <source>
        <dbReference type="PDB" id="2Y73"/>
    </source>
</evidence>
<evidence type="ECO:0007829" key="32">
    <source>
        <dbReference type="PDB" id="3ALA"/>
    </source>
</evidence>
<evidence type="ECO:0007829" key="33">
    <source>
        <dbReference type="PDB" id="4BTW"/>
    </source>
</evidence>
<evidence type="ECO:0007829" key="34">
    <source>
        <dbReference type="PDB" id="4BTY"/>
    </source>
</evidence>
<protein>
    <recommendedName>
        <fullName evidence="20">Amine oxidase [copper-containing] 3</fullName>
        <ecNumber evidence="8">1.4.3.21</ecNumber>
    </recommendedName>
    <alternativeName>
        <fullName evidence="22">Amine oxidase copper-containing 3</fullName>
    </alternativeName>
    <alternativeName>
        <fullName>Copper amine oxidase</fullName>
    </alternativeName>
    <alternativeName>
        <fullName>HPAO</fullName>
    </alternativeName>
    <alternativeName>
        <fullName evidence="15">Semicarbazide-sensitive amine oxidase</fullName>
        <shortName evidence="15">SSAO</shortName>
    </alternativeName>
    <alternativeName>
        <fullName evidence="17">Vascular adhesion protein 1</fullName>
        <shortName evidence="17">VAP-1</shortName>
    </alternativeName>
</protein>
<keyword id="KW-0002">3D-structure</keyword>
<keyword id="KW-0025">Alternative splicing</keyword>
<keyword id="KW-0106">Calcium</keyword>
<keyword id="KW-0130">Cell adhesion</keyword>
<keyword id="KW-1003">Cell membrane</keyword>
<keyword id="KW-0186">Copper</keyword>
<keyword id="KW-0903">Direct protein sequencing</keyword>
<keyword id="KW-1015">Disulfide bond</keyword>
<keyword id="KW-0325">Glycoprotein</keyword>
<keyword id="KW-0472">Membrane</keyword>
<keyword id="KW-0479">Metal-binding</keyword>
<keyword id="KW-0560">Oxidoreductase</keyword>
<keyword id="KW-1267">Proteomics identification</keyword>
<keyword id="KW-1185">Reference proteome</keyword>
<keyword id="KW-0735">Signal-anchor</keyword>
<keyword id="KW-0801">TPQ</keyword>
<keyword id="KW-0812">Transmembrane</keyword>
<keyword id="KW-1133">Transmembrane helix</keyword>
<dbReference type="EC" id="1.4.3.21" evidence="8"/>
<dbReference type="EMBL" id="U39447">
    <property type="protein sequence ID" value="AAC50919.1"/>
    <property type="molecule type" value="mRNA"/>
</dbReference>
<dbReference type="EMBL" id="AF067406">
    <property type="protein sequence ID" value="AAC25170.1"/>
    <property type="molecule type" value="mRNA"/>
</dbReference>
<dbReference type="EMBL" id="AB050502">
    <property type="protein sequence ID" value="BAB18866.1"/>
    <property type="molecule type" value="Genomic_DNA"/>
</dbReference>
<dbReference type="EMBL" id="JX020506">
    <property type="protein sequence ID" value="AGB67480.1"/>
    <property type="molecule type" value="mRNA"/>
</dbReference>
<dbReference type="EMBL" id="AK025727">
    <property type="status" value="NOT_ANNOTATED_CDS"/>
    <property type="molecule type" value="mRNA"/>
</dbReference>
<dbReference type="EMBL" id="AK315129">
    <property type="protein sequence ID" value="BAG37582.1"/>
    <property type="molecule type" value="mRNA"/>
</dbReference>
<dbReference type="EMBL" id="DQ143944">
    <property type="protein sequence ID" value="AAZ38716.1"/>
    <property type="molecule type" value="Genomic_DNA"/>
</dbReference>
<dbReference type="EMBL" id="AC016889">
    <property type="status" value="NOT_ANNOTATED_CDS"/>
    <property type="molecule type" value="Genomic_DNA"/>
</dbReference>
<dbReference type="EMBL" id="BC050549">
    <property type="protein sequence ID" value="AAH50549.1"/>
    <property type="molecule type" value="mRNA"/>
</dbReference>
<dbReference type="CCDS" id="CCDS11444.1">
    <molecule id="Q16853-1"/>
</dbReference>
<dbReference type="CCDS" id="CCDS62198.1">
    <molecule id="Q16853-3"/>
</dbReference>
<dbReference type="CCDS" id="CCDS74071.1">
    <molecule id="Q16853-2"/>
</dbReference>
<dbReference type="PIR" id="JC5234">
    <property type="entry name" value="JC5234"/>
</dbReference>
<dbReference type="RefSeq" id="NP_001264660.1">
    <molecule id="Q16853-2"/>
    <property type="nucleotide sequence ID" value="NM_001277731.2"/>
</dbReference>
<dbReference type="RefSeq" id="NP_001264661.1">
    <molecule id="Q16853-3"/>
    <property type="nucleotide sequence ID" value="NM_001277732.2"/>
</dbReference>
<dbReference type="RefSeq" id="NP_003725.1">
    <molecule id="Q16853-1"/>
    <property type="nucleotide sequence ID" value="NM_003734.4"/>
</dbReference>
<dbReference type="RefSeq" id="XP_024306783.1">
    <molecule id="Q16853-3"/>
    <property type="nucleotide sequence ID" value="XM_024451015.2"/>
</dbReference>
<dbReference type="RefSeq" id="XP_054173627.1">
    <molecule id="Q16853-3"/>
    <property type="nucleotide sequence ID" value="XM_054317652.1"/>
</dbReference>
<dbReference type="PDB" id="1PU4">
    <property type="method" value="X-ray"/>
    <property type="resolution" value="3.20 A"/>
    <property type="chains" value="A/B=1-763"/>
</dbReference>
<dbReference type="PDB" id="1US1">
    <property type="method" value="X-ray"/>
    <property type="resolution" value="2.90 A"/>
    <property type="chains" value="A/B=1-763"/>
</dbReference>
<dbReference type="PDB" id="2C10">
    <property type="method" value="X-ray"/>
    <property type="resolution" value="2.50 A"/>
    <property type="chains" value="A/B/C/D=29-763"/>
</dbReference>
<dbReference type="PDB" id="2C11">
    <property type="method" value="X-ray"/>
    <property type="resolution" value="2.90 A"/>
    <property type="chains" value="A/B/C/D=29-763"/>
</dbReference>
<dbReference type="PDB" id="2Y73">
    <property type="method" value="X-ray"/>
    <property type="resolution" value="2.60 A"/>
    <property type="chains" value="A/B=1-763"/>
</dbReference>
<dbReference type="PDB" id="2Y74">
    <property type="method" value="X-ray"/>
    <property type="resolution" value="2.95 A"/>
    <property type="chains" value="A/B=1-763"/>
</dbReference>
<dbReference type="PDB" id="3ALA">
    <property type="method" value="X-ray"/>
    <property type="resolution" value="2.90 A"/>
    <property type="chains" value="A/B/C/D/E/F/G=33-763"/>
</dbReference>
<dbReference type="PDB" id="4BTW">
    <property type="method" value="X-ray"/>
    <property type="resolution" value="2.80 A"/>
    <property type="chains" value="A/B=27-763"/>
</dbReference>
<dbReference type="PDB" id="4BTX">
    <property type="method" value="X-ray"/>
    <property type="resolution" value="2.78 A"/>
    <property type="chains" value="A/B=27-763"/>
</dbReference>
<dbReference type="PDB" id="4BTY">
    <property type="method" value="X-ray"/>
    <property type="resolution" value="3.10 A"/>
    <property type="chains" value="A/B=27-763"/>
</dbReference>
<dbReference type="PDB" id="8S1Z">
    <property type="method" value="X-ray"/>
    <property type="resolution" value="3.80 A"/>
    <property type="chains" value="A/B/C/D=27-763"/>
</dbReference>
<dbReference type="PDBsum" id="1PU4"/>
<dbReference type="PDBsum" id="1US1"/>
<dbReference type="PDBsum" id="2C10"/>
<dbReference type="PDBsum" id="2C11"/>
<dbReference type="PDBsum" id="2Y73"/>
<dbReference type="PDBsum" id="2Y74"/>
<dbReference type="PDBsum" id="3ALA"/>
<dbReference type="PDBsum" id="4BTW"/>
<dbReference type="PDBsum" id="4BTX"/>
<dbReference type="PDBsum" id="4BTY"/>
<dbReference type="PDBsum" id="8S1Z"/>
<dbReference type="SMR" id="Q16853"/>
<dbReference type="BioGRID" id="114192">
    <property type="interactions" value="58"/>
</dbReference>
<dbReference type="FunCoup" id="Q16853">
    <property type="interactions" value="200"/>
</dbReference>
<dbReference type="IntAct" id="Q16853">
    <property type="interactions" value="22"/>
</dbReference>
<dbReference type="STRING" id="9606.ENSP00000312326"/>
<dbReference type="BindingDB" id="Q16853"/>
<dbReference type="ChEMBL" id="CHEMBL3437"/>
<dbReference type="DrugBank" id="DB04334">
    <property type="generic name" value="6-hydroxydopa quinone"/>
</dbReference>
<dbReference type="DrugBank" id="DB00575">
    <property type="generic name" value="Clonidine"/>
</dbReference>
<dbReference type="DrugBank" id="DB01275">
    <property type="generic name" value="Hydralazine"/>
</dbReference>
<dbReference type="DrugBank" id="DB00780">
    <property type="generic name" value="Phenelzine"/>
</dbReference>
<dbReference type="DrugBank" id="DB19177">
    <property type="generic name" value="PXS-4728A free base"/>
</dbReference>
<dbReference type="DrugCentral" id="Q16853"/>
<dbReference type="GuidetoPHARMACOLOGY" id="2767"/>
<dbReference type="GlyConnect" id="1502">
    <property type="glycosylation" value="9 N-Linked glycans (4 sites)"/>
</dbReference>
<dbReference type="GlyCosmos" id="Q16853">
    <property type="glycosylation" value="8 sites, 9 glycans"/>
</dbReference>
<dbReference type="GlyGen" id="Q16853">
    <property type="glycosylation" value="11 sites, 43 N-linked glycans (3 sites), 1 O-linked glycan (1 site)"/>
</dbReference>
<dbReference type="iPTMnet" id="Q16853"/>
<dbReference type="PhosphoSitePlus" id="Q16853"/>
<dbReference type="SwissPalm" id="Q16853"/>
<dbReference type="BioMuta" id="AOC3"/>
<dbReference type="DMDM" id="2501336"/>
<dbReference type="MassIVE" id="Q16853"/>
<dbReference type="PaxDb" id="9606-ENSP00000312326"/>
<dbReference type="PeptideAtlas" id="Q16853"/>
<dbReference type="ProteomicsDB" id="61105">
    <molecule id="Q16853-1"/>
</dbReference>
<dbReference type="Pumba" id="Q16853"/>
<dbReference type="ABCD" id="Q16853">
    <property type="antibodies" value="8 sequenced antibodies"/>
</dbReference>
<dbReference type="Antibodypedia" id="611">
    <property type="antibodies" value="485 antibodies from 39 providers"/>
</dbReference>
<dbReference type="DNASU" id="8639"/>
<dbReference type="Ensembl" id="ENST00000308423.7">
    <molecule id="Q16853-1"/>
    <property type="protein sequence ID" value="ENSP00000312326.1"/>
    <property type="gene ID" value="ENSG00000131471.7"/>
</dbReference>
<dbReference type="Ensembl" id="ENST00000591562.1">
    <molecule id="Q16853-3"/>
    <property type="protein sequence ID" value="ENSP00000468632.1"/>
    <property type="gene ID" value="ENSG00000131471.7"/>
</dbReference>
<dbReference type="Ensembl" id="ENST00000613571.1">
    <molecule id="Q16853-2"/>
    <property type="protein sequence ID" value="ENSP00000484312.1"/>
    <property type="gene ID" value="ENSG00000131471.7"/>
</dbReference>
<dbReference type="Ensembl" id="ENST00000617500.4">
    <molecule id="Q16853-3"/>
    <property type="protein sequence ID" value="ENSP00000477686.1"/>
    <property type="gene ID" value="ENSG00000131471.7"/>
</dbReference>
<dbReference type="GeneID" id="8639"/>
<dbReference type="KEGG" id="hsa:8639"/>
<dbReference type="MANE-Select" id="ENST00000308423.7">
    <property type="protein sequence ID" value="ENSP00000312326.1"/>
    <property type="RefSeq nucleotide sequence ID" value="NM_003734.4"/>
    <property type="RefSeq protein sequence ID" value="NP_003725.1"/>
</dbReference>
<dbReference type="UCSC" id="uc002ibv.6">
    <molecule id="Q16853-1"/>
    <property type="organism name" value="human"/>
</dbReference>
<dbReference type="AGR" id="HGNC:550"/>
<dbReference type="CTD" id="8639"/>
<dbReference type="DisGeNET" id="8639"/>
<dbReference type="GeneCards" id="AOC3"/>
<dbReference type="HGNC" id="HGNC:550">
    <property type="gene designation" value="AOC3"/>
</dbReference>
<dbReference type="HPA" id="ENSG00000131471">
    <property type="expression patterns" value="Tissue enhanced (adipose)"/>
</dbReference>
<dbReference type="MIM" id="603735">
    <property type="type" value="gene"/>
</dbReference>
<dbReference type="neXtProt" id="NX_Q16853"/>
<dbReference type="OpenTargets" id="ENSG00000131471"/>
<dbReference type="PharmGKB" id="PA24840"/>
<dbReference type="VEuPathDB" id="HostDB:ENSG00000131471"/>
<dbReference type="eggNOG" id="KOG1186">
    <property type="taxonomic scope" value="Eukaryota"/>
</dbReference>
<dbReference type="GeneTree" id="ENSGT00950000183207"/>
<dbReference type="HOGENOM" id="CLU_015739_1_0_1"/>
<dbReference type="InParanoid" id="Q16853"/>
<dbReference type="OMA" id="CMFEIDK"/>
<dbReference type="OrthoDB" id="5379943at2759"/>
<dbReference type="PAN-GO" id="Q16853">
    <property type="GO annotations" value="8 GO annotations based on evolutionary models"/>
</dbReference>
<dbReference type="PhylomeDB" id="Q16853"/>
<dbReference type="TreeFam" id="TF314750"/>
<dbReference type="BRENDA" id="1.4.3.21">
    <property type="organism ID" value="2681"/>
</dbReference>
<dbReference type="PathwayCommons" id="Q16853"/>
<dbReference type="Reactome" id="R-HSA-211945">
    <property type="pathway name" value="Phase I - Functionalization of compounds"/>
</dbReference>
<dbReference type="SABIO-RK" id="Q16853"/>
<dbReference type="SignaLink" id="Q16853"/>
<dbReference type="BioGRID-ORCS" id="8639">
    <property type="hits" value="11 hits in 1147 CRISPR screens"/>
</dbReference>
<dbReference type="ChiTaRS" id="AOC3">
    <property type="organism name" value="human"/>
</dbReference>
<dbReference type="EvolutionaryTrace" id="Q16853"/>
<dbReference type="GeneWiki" id="AOC3"/>
<dbReference type="GenomeRNAi" id="8639"/>
<dbReference type="Pharos" id="Q16853">
    <property type="development level" value="Tchem"/>
</dbReference>
<dbReference type="PRO" id="PR:Q16853"/>
<dbReference type="Proteomes" id="UP000005640">
    <property type="component" value="Chromosome 17"/>
</dbReference>
<dbReference type="RNAct" id="Q16853">
    <property type="molecule type" value="protein"/>
</dbReference>
<dbReference type="Bgee" id="ENSG00000131471">
    <property type="expression patterns" value="Expressed in blood vessel layer and 178 other cell types or tissues"/>
</dbReference>
<dbReference type="ExpressionAtlas" id="Q16853">
    <property type="expression patterns" value="baseline and differential"/>
</dbReference>
<dbReference type="GO" id="GO:0009986">
    <property type="term" value="C:cell surface"/>
    <property type="evidence" value="ECO:0000314"/>
    <property type="project" value="UniProtKB"/>
</dbReference>
<dbReference type="GO" id="GO:0005737">
    <property type="term" value="C:cytoplasm"/>
    <property type="evidence" value="ECO:0000314"/>
    <property type="project" value="UniProtKB"/>
</dbReference>
<dbReference type="GO" id="GO:0005769">
    <property type="term" value="C:early endosome"/>
    <property type="evidence" value="ECO:0000314"/>
    <property type="project" value="CACAO"/>
</dbReference>
<dbReference type="GO" id="GO:0005783">
    <property type="term" value="C:endoplasmic reticulum"/>
    <property type="evidence" value="ECO:0000314"/>
    <property type="project" value="CACAO"/>
</dbReference>
<dbReference type="GO" id="GO:0005794">
    <property type="term" value="C:Golgi apparatus"/>
    <property type="evidence" value="ECO:0000314"/>
    <property type="project" value="CACAO"/>
</dbReference>
<dbReference type="GO" id="GO:0016020">
    <property type="term" value="C:membrane"/>
    <property type="evidence" value="ECO:0000314"/>
    <property type="project" value="UniProtKB"/>
</dbReference>
<dbReference type="GO" id="GO:0005902">
    <property type="term" value="C:microvillus"/>
    <property type="evidence" value="ECO:0000314"/>
    <property type="project" value="UniProtKB"/>
</dbReference>
<dbReference type="GO" id="GO:0005886">
    <property type="term" value="C:plasma membrane"/>
    <property type="evidence" value="ECO:0000314"/>
    <property type="project" value="UniProtKB"/>
</dbReference>
<dbReference type="GO" id="GO:0005509">
    <property type="term" value="F:calcium ion binding"/>
    <property type="evidence" value="ECO:0000314"/>
    <property type="project" value="UniProtKB"/>
</dbReference>
<dbReference type="GO" id="GO:0005507">
    <property type="term" value="F:copper ion binding"/>
    <property type="evidence" value="ECO:0000314"/>
    <property type="project" value="UniProtKB"/>
</dbReference>
<dbReference type="GO" id="GO:0042802">
    <property type="term" value="F:identical protein binding"/>
    <property type="evidence" value="ECO:0000353"/>
    <property type="project" value="UniProtKB"/>
</dbReference>
<dbReference type="GO" id="GO:0008131">
    <property type="term" value="F:primary methylamine oxidase activity"/>
    <property type="evidence" value="ECO:0000314"/>
    <property type="project" value="UniProtKB"/>
</dbReference>
<dbReference type="GO" id="GO:0046982">
    <property type="term" value="F:protein heterodimerization activity"/>
    <property type="evidence" value="ECO:0000353"/>
    <property type="project" value="UniProtKB"/>
</dbReference>
<dbReference type="GO" id="GO:0048038">
    <property type="term" value="F:quinone binding"/>
    <property type="evidence" value="ECO:0000314"/>
    <property type="project" value="UniProtKB"/>
</dbReference>
<dbReference type="GO" id="GO:0009308">
    <property type="term" value="P:amine metabolic process"/>
    <property type="evidence" value="ECO:0000314"/>
    <property type="project" value="UniProtKB"/>
</dbReference>
<dbReference type="GO" id="GO:0007155">
    <property type="term" value="P:cell adhesion"/>
    <property type="evidence" value="ECO:0000314"/>
    <property type="project" value="UniProtKB"/>
</dbReference>
<dbReference type="GO" id="GO:0006954">
    <property type="term" value="P:inflammatory response"/>
    <property type="evidence" value="ECO:0000304"/>
    <property type="project" value="UniProtKB"/>
</dbReference>
<dbReference type="FunFam" id="2.70.98.20:FF:000003">
    <property type="entry name" value="Amine oxidase"/>
    <property type="match status" value="1"/>
</dbReference>
<dbReference type="FunFam" id="3.10.450.40:FF:000001">
    <property type="entry name" value="Amine oxidase"/>
    <property type="match status" value="1"/>
</dbReference>
<dbReference type="FunFam" id="3.10.450.40:FF:000003">
    <property type="entry name" value="Amine oxidase"/>
    <property type="match status" value="1"/>
</dbReference>
<dbReference type="Gene3D" id="3.10.450.40">
    <property type="match status" value="2"/>
</dbReference>
<dbReference type="Gene3D" id="2.70.98.20">
    <property type="entry name" value="Copper amine oxidase, catalytic domain"/>
    <property type="match status" value="1"/>
</dbReference>
<dbReference type="InterPro" id="IPR049947">
    <property type="entry name" value="Cu_Am_Ox_Cu-bd"/>
</dbReference>
<dbReference type="InterPro" id="IPR049948">
    <property type="entry name" value="Cu_Am_ox_TPQ-bd"/>
</dbReference>
<dbReference type="InterPro" id="IPR000269">
    <property type="entry name" value="Cu_amine_oxidase"/>
</dbReference>
<dbReference type="InterPro" id="IPR015798">
    <property type="entry name" value="Cu_amine_oxidase_C"/>
</dbReference>
<dbReference type="InterPro" id="IPR036460">
    <property type="entry name" value="Cu_amine_oxidase_C_sf"/>
</dbReference>
<dbReference type="InterPro" id="IPR016182">
    <property type="entry name" value="Cu_amine_oxidase_N-reg"/>
</dbReference>
<dbReference type="InterPro" id="IPR015800">
    <property type="entry name" value="Cu_amine_oxidase_N2"/>
</dbReference>
<dbReference type="InterPro" id="IPR015802">
    <property type="entry name" value="Cu_amine_oxidase_N3"/>
</dbReference>
<dbReference type="PANTHER" id="PTHR10638">
    <property type="entry name" value="COPPER AMINE OXIDASE"/>
    <property type="match status" value="1"/>
</dbReference>
<dbReference type="PANTHER" id="PTHR10638:SF23">
    <property type="entry name" value="MEMBRANE PRIMARY AMINE OXIDASE"/>
    <property type="match status" value="1"/>
</dbReference>
<dbReference type="Pfam" id="PF01179">
    <property type="entry name" value="Cu_amine_oxid"/>
    <property type="match status" value="1"/>
</dbReference>
<dbReference type="Pfam" id="PF02727">
    <property type="entry name" value="Cu_amine_oxidN2"/>
    <property type="match status" value="1"/>
</dbReference>
<dbReference type="Pfam" id="PF02728">
    <property type="entry name" value="Cu_amine_oxidN3"/>
    <property type="match status" value="1"/>
</dbReference>
<dbReference type="PRINTS" id="PR00766">
    <property type="entry name" value="CUDAOXIDASE"/>
</dbReference>
<dbReference type="SUPFAM" id="SSF49998">
    <property type="entry name" value="Amine oxidase catalytic domain"/>
    <property type="match status" value="1"/>
</dbReference>
<dbReference type="SUPFAM" id="SSF54416">
    <property type="entry name" value="Amine oxidase N-terminal region"/>
    <property type="match status" value="2"/>
</dbReference>
<dbReference type="PROSITE" id="PS01164">
    <property type="entry name" value="COPPER_AMINE_OXID_1"/>
    <property type="match status" value="1"/>
</dbReference>
<dbReference type="PROSITE" id="PS01165">
    <property type="entry name" value="COPPER_AMINE_OXID_2"/>
    <property type="match status" value="1"/>
</dbReference>
<accession>Q16853</accession>
<accession>B2RCI5</accession>
<accession>K7ESB3</accession>
<accession>L0L8N9</accession>
<accession>Q45F94</accession>